<keyword id="KW-0002">3D-structure</keyword>
<keyword id="KW-0007">Acetylation</keyword>
<keyword id="KW-0175">Coiled coil</keyword>
<keyword id="KW-0967">Endosome</keyword>
<keyword id="KW-0333">Golgi apparatus</keyword>
<keyword id="KW-0472">Membrane</keyword>
<keyword id="KW-0597">Phosphoprotein</keyword>
<keyword id="KW-0653">Protein transport</keyword>
<keyword id="KW-1267">Proteomics identification</keyword>
<keyword id="KW-1185">Reference proteome</keyword>
<keyword id="KW-0812">Transmembrane</keyword>
<keyword id="KW-1133">Transmembrane helix</keyword>
<keyword id="KW-0813">Transport</keyword>
<accession>Q86Y82</accession>
<accession>B1AJQ7</accession>
<accession>O95564</accession>
<gene>
    <name type="primary">STX12</name>
</gene>
<name>STX12_HUMAN</name>
<dbReference type="EMBL" id="AF123769">
    <property type="protein sequence ID" value="AAP97248.1"/>
    <property type="molecule type" value="mRNA"/>
</dbReference>
<dbReference type="EMBL" id="AL035306">
    <property type="protein sequence ID" value="CAA22911.1"/>
    <property type="status" value="ALT_INIT"/>
    <property type="molecule type" value="mRNA"/>
</dbReference>
<dbReference type="EMBL" id="AK297585">
    <property type="protein sequence ID" value="BAG59973.1"/>
    <property type="molecule type" value="mRNA"/>
</dbReference>
<dbReference type="EMBL" id="AL020997">
    <property type="status" value="NOT_ANNOTATED_CDS"/>
    <property type="molecule type" value="Genomic_DNA"/>
</dbReference>
<dbReference type="EMBL" id="CH471059">
    <property type="protein sequence ID" value="EAX07738.1"/>
    <property type="molecule type" value="Genomic_DNA"/>
</dbReference>
<dbReference type="EMBL" id="CH471059">
    <property type="protein sequence ID" value="EAX07739.1"/>
    <property type="molecule type" value="Genomic_DNA"/>
</dbReference>
<dbReference type="EMBL" id="BC046999">
    <property type="protein sequence ID" value="AAH46999.1"/>
    <property type="molecule type" value="mRNA"/>
</dbReference>
<dbReference type="CCDS" id="CCDS310.1"/>
<dbReference type="RefSeq" id="NP_803173.1">
    <property type="nucleotide sequence ID" value="NM_177424.3"/>
</dbReference>
<dbReference type="PDB" id="2DNX">
    <property type="method" value="NMR"/>
    <property type="chains" value="A=18-134"/>
</dbReference>
<dbReference type="PDBsum" id="2DNX"/>
<dbReference type="SMR" id="Q86Y82"/>
<dbReference type="BioGRID" id="117191">
    <property type="interactions" value="253"/>
</dbReference>
<dbReference type="CORUM" id="Q86Y82"/>
<dbReference type="DIP" id="DIP-44225N"/>
<dbReference type="FunCoup" id="Q86Y82">
    <property type="interactions" value="3365"/>
</dbReference>
<dbReference type="IntAct" id="Q86Y82">
    <property type="interactions" value="181"/>
</dbReference>
<dbReference type="MINT" id="Q86Y82"/>
<dbReference type="STRING" id="9606.ENSP00000363054"/>
<dbReference type="GlyGen" id="Q86Y82">
    <property type="glycosylation" value="1 site, 1 O-linked glycan (1 site)"/>
</dbReference>
<dbReference type="iPTMnet" id="Q86Y82"/>
<dbReference type="PhosphoSitePlus" id="Q86Y82"/>
<dbReference type="SwissPalm" id="Q86Y82"/>
<dbReference type="BioMuta" id="STX12"/>
<dbReference type="DMDM" id="47117211"/>
<dbReference type="jPOST" id="Q86Y82"/>
<dbReference type="MassIVE" id="Q86Y82"/>
<dbReference type="PaxDb" id="9606-ENSP00000363054"/>
<dbReference type="PeptideAtlas" id="Q86Y82"/>
<dbReference type="ProteomicsDB" id="70382"/>
<dbReference type="Pumba" id="Q86Y82"/>
<dbReference type="Antibodypedia" id="30837">
    <property type="antibodies" value="188 antibodies from 28 providers"/>
</dbReference>
<dbReference type="DNASU" id="23673"/>
<dbReference type="Ensembl" id="ENST00000373943.9">
    <property type="protein sequence ID" value="ENSP00000363054.4"/>
    <property type="gene ID" value="ENSG00000117758.14"/>
</dbReference>
<dbReference type="GeneID" id="23673"/>
<dbReference type="KEGG" id="hsa:23673"/>
<dbReference type="MANE-Select" id="ENST00000373943.9">
    <property type="protein sequence ID" value="ENSP00000363054.4"/>
    <property type="RefSeq nucleotide sequence ID" value="NM_177424.3"/>
    <property type="RefSeq protein sequence ID" value="NP_803173.1"/>
</dbReference>
<dbReference type="UCSC" id="uc001bou.4">
    <property type="organism name" value="human"/>
</dbReference>
<dbReference type="AGR" id="HGNC:11430"/>
<dbReference type="CTD" id="23673"/>
<dbReference type="DisGeNET" id="23673"/>
<dbReference type="GeneCards" id="STX12"/>
<dbReference type="HGNC" id="HGNC:11430">
    <property type="gene designation" value="STX12"/>
</dbReference>
<dbReference type="HPA" id="ENSG00000117758">
    <property type="expression patterns" value="Low tissue specificity"/>
</dbReference>
<dbReference type="MIM" id="606892">
    <property type="type" value="gene"/>
</dbReference>
<dbReference type="neXtProt" id="NX_Q86Y82"/>
<dbReference type="OpenTargets" id="ENSG00000117758"/>
<dbReference type="PharmGKB" id="PA36230"/>
<dbReference type="VEuPathDB" id="HostDB:ENSG00000117758"/>
<dbReference type="eggNOG" id="KOG0811">
    <property type="taxonomic scope" value="Eukaryota"/>
</dbReference>
<dbReference type="GeneTree" id="ENSGT01000000214440"/>
<dbReference type="HOGENOM" id="CLU_059257_1_1_1"/>
<dbReference type="InParanoid" id="Q86Y82"/>
<dbReference type="OMA" id="QPFLMEQ"/>
<dbReference type="OrthoDB" id="364348at2759"/>
<dbReference type="PAN-GO" id="Q86Y82">
    <property type="GO annotations" value="10 GO annotations based on evolutionary models"/>
</dbReference>
<dbReference type="PhylomeDB" id="Q86Y82"/>
<dbReference type="TreeFam" id="TF315607"/>
<dbReference type="PathwayCommons" id="Q86Y82"/>
<dbReference type="SignaLink" id="Q86Y82"/>
<dbReference type="BioGRID-ORCS" id="23673">
    <property type="hits" value="18 hits in 1159 CRISPR screens"/>
</dbReference>
<dbReference type="CD-CODE" id="FB4E32DD">
    <property type="entry name" value="Presynaptic clusters and postsynaptic densities"/>
</dbReference>
<dbReference type="ChiTaRS" id="STX12">
    <property type="organism name" value="human"/>
</dbReference>
<dbReference type="EvolutionaryTrace" id="Q86Y82"/>
<dbReference type="GeneWiki" id="STX12"/>
<dbReference type="GenomeRNAi" id="23673"/>
<dbReference type="Pharos" id="Q86Y82">
    <property type="development level" value="Tbio"/>
</dbReference>
<dbReference type="PRO" id="PR:Q86Y82"/>
<dbReference type="Proteomes" id="UP000005640">
    <property type="component" value="Chromosome 1"/>
</dbReference>
<dbReference type="RNAct" id="Q86Y82">
    <property type="molecule type" value="protein"/>
</dbReference>
<dbReference type="Bgee" id="ENSG00000117758">
    <property type="expression patterns" value="Expressed in middle temporal gyrus and 202 other cell types or tissues"/>
</dbReference>
<dbReference type="ExpressionAtlas" id="Q86Y82">
    <property type="expression patterns" value="baseline and differential"/>
</dbReference>
<dbReference type="GO" id="GO:0031901">
    <property type="term" value="C:early endosome membrane"/>
    <property type="evidence" value="ECO:0007669"/>
    <property type="project" value="UniProtKB-SubCell"/>
</dbReference>
<dbReference type="GO" id="GO:0012505">
    <property type="term" value="C:endomembrane system"/>
    <property type="evidence" value="ECO:0000318"/>
    <property type="project" value="GO_Central"/>
</dbReference>
<dbReference type="GO" id="GO:0005794">
    <property type="term" value="C:Golgi apparatus"/>
    <property type="evidence" value="ECO:0000314"/>
    <property type="project" value="HPA"/>
</dbReference>
<dbReference type="GO" id="GO:0000139">
    <property type="term" value="C:Golgi membrane"/>
    <property type="evidence" value="ECO:0007669"/>
    <property type="project" value="UniProtKB-SubCell"/>
</dbReference>
<dbReference type="GO" id="GO:0043231">
    <property type="term" value="C:intracellular membrane-bounded organelle"/>
    <property type="evidence" value="ECO:0000314"/>
    <property type="project" value="HPA"/>
</dbReference>
<dbReference type="GO" id="GO:0045121">
    <property type="term" value="C:membrane raft"/>
    <property type="evidence" value="ECO:0000314"/>
    <property type="project" value="BHF-UCL"/>
</dbReference>
<dbReference type="GO" id="GO:0005654">
    <property type="term" value="C:nucleoplasm"/>
    <property type="evidence" value="ECO:0000314"/>
    <property type="project" value="HPA"/>
</dbReference>
<dbReference type="GO" id="GO:0045335">
    <property type="term" value="C:phagocytic vesicle"/>
    <property type="evidence" value="ECO:0000314"/>
    <property type="project" value="BHF-UCL"/>
</dbReference>
<dbReference type="GO" id="GO:0000407">
    <property type="term" value="C:phagophore assembly site"/>
    <property type="evidence" value="ECO:0000315"/>
    <property type="project" value="ParkinsonsUK-UCL"/>
</dbReference>
<dbReference type="GO" id="GO:0098837">
    <property type="term" value="C:postsynaptic recycling endosome"/>
    <property type="evidence" value="ECO:0000318"/>
    <property type="project" value="GO_Central"/>
</dbReference>
<dbReference type="GO" id="GO:0055037">
    <property type="term" value="C:recycling endosome"/>
    <property type="evidence" value="ECO:0000250"/>
    <property type="project" value="UniProtKB"/>
</dbReference>
<dbReference type="GO" id="GO:0055038">
    <property type="term" value="C:recycling endosome membrane"/>
    <property type="evidence" value="ECO:0007669"/>
    <property type="project" value="UniProtKB-SubCell"/>
</dbReference>
<dbReference type="GO" id="GO:0031201">
    <property type="term" value="C:SNARE complex"/>
    <property type="evidence" value="ECO:0000314"/>
    <property type="project" value="UniProtKB"/>
</dbReference>
<dbReference type="GO" id="GO:0008021">
    <property type="term" value="C:synaptic vesicle"/>
    <property type="evidence" value="ECO:0000318"/>
    <property type="project" value="GO_Central"/>
</dbReference>
<dbReference type="GO" id="GO:0030672">
    <property type="term" value="C:synaptic vesicle membrane"/>
    <property type="evidence" value="ECO:0000318"/>
    <property type="project" value="GO_Central"/>
</dbReference>
<dbReference type="GO" id="GO:0031982">
    <property type="term" value="C:vesicle"/>
    <property type="evidence" value="ECO:0000315"/>
    <property type="project" value="ParkinsonsUK-UCL"/>
</dbReference>
<dbReference type="GO" id="GO:0005484">
    <property type="term" value="F:SNAP receptor activity"/>
    <property type="evidence" value="ECO:0000318"/>
    <property type="project" value="GO_Central"/>
</dbReference>
<dbReference type="GO" id="GO:0000149">
    <property type="term" value="F:SNARE binding"/>
    <property type="evidence" value="ECO:0000318"/>
    <property type="project" value="GO_Central"/>
</dbReference>
<dbReference type="GO" id="GO:0000045">
    <property type="term" value="P:autophagosome assembly"/>
    <property type="evidence" value="ECO:0000315"/>
    <property type="project" value="ParkinsonsUK-UCL"/>
</dbReference>
<dbReference type="GO" id="GO:0033344">
    <property type="term" value="P:cholesterol efflux"/>
    <property type="evidence" value="ECO:0000314"/>
    <property type="project" value="BHF-UCL"/>
</dbReference>
<dbReference type="GO" id="GO:0032456">
    <property type="term" value="P:endocytic recycling"/>
    <property type="evidence" value="ECO:0000250"/>
    <property type="project" value="UniProtKB"/>
</dbReference>
<dbReference type="GO" id="GO:0006886">
    <property type="term" value="P:intracellular protein transport"/>
    <property type="evidence" value="ECO:0000318"/>
    <property type="project" value="GO_Central"/>
</dbReference>
<dbReference type="GO" id="GO:0050821">
    <property type="term" value="P:protein stabilization"/>
    <property type="evidence" value="ECO:0000314"/>
    <property type="project" value="BHF-UCL"/>
</dbReference>
<dbReference type="GO" id="GO:0048278">
    <property type="term" value="P:vesicle docking"/>
    <property type="evidence" value="ECO:0000318"/>
    <property type="project" value="GO_Central"/>
</dbReference>
<dbReference type="GO" id="GO:0006906">
    <property type="term" value="P:vesicle fusion"/>
    <property type="evidence" value="ECO:0000318"/>
    <property type="project" value="GO_Central"/>
</dbReference>
<dbReference type="CDD" id="cd15876">
    <property type="entry name" value="SNARE_syntaxin12"/>
    <property type="match status" value="1"/>
</dbReference>
<dbReference type="CDD" id="cd00179">
    <property type="entry name" value="SynN"/>
    <property type="match status" value="1"/>
</dbReference>
<dbReference type="FunFam" id="1.20.5.110:FF:000016">
    <property type="entry name" value="Syntaxin 12"/>
    <property type="match status" value="1"/>
</dbReference>
<dbReference type="FunFam" id="1.20.58.70:FF:000009">
    <property type="entry name" value="Syntaxin 12"/>
    <property type="match status" value="1"/>
</dbReference>
<dbReference type="Gene3D" id="1.20.5.110">
    <property type="match status" value="1"/>
</dbReference>
<dbReference type="Gene3D" id="1.20.58.70">
    <property type="match status" value="1"/>
</dbReference>
<dbReference type="InterPro" id="IPR010989">
    <property type="entry name" value="SNARE"/>
</dbReference>
<dbReference type="InterPro" id="IPR045242">
    <property type="entry name" value="Syntaxin"/>
</dbReference>
<dbReference type="InterPro" id="IPR006012">
    <property type="entry name" value="Syntaxin/epimorphin_CS"/>
</dbReference>
<dbReference type="InterPro" id="IPR006011">
    <property type="entry name" value="Syntaxin_N"/>
</dbReference>
<dbReference type="InterPro" id="IPR000727">
    <property type="entry name" value="T_SNARE_dom"/>
</dbReference>
<dbReference type="PANTHER" id="PTHR19957">
    <property type="entry name" value="SYNTAXIN"/>
    <property type="match status" value="1"/>
</dbReference>
<dbReference type="PANTHER" id="PTHR19957:SF88">
    <property type="entry name" value="SYNTAXIN-12"/>
    <property type="match status" value="1"/>
</dbReference>
<dbReference type="Pfam" id="PF05739">
    <property type="entry name" value="SNARE"/>
    <property type="match status" value="1"/>
</dbReference>
<dbReference type="Pfam" id="PF14523">
    <property type="entry name" value="Syntaxin_2"/>
    <property type="match status" value="1"/>
</dbReference>
<dbReference type="SMART" id="SM00503">
    <property type="entry name" value="SynN"/>
    <property type="match status" value="1"/>
</dbReference>
<dbReference type="SMART" id="SM00397">
    <property type="entry name" value="t_SNARE"/>
    <property type="match status" value="1"/>
</dbReference>
<dbReference type="SUPFAM" id="SSF47661">
    <property type="entry name" value="t-snare proteins"/>
    <property type="match status" value="1"/>
</dbReference>
<dbReference type="PROSITE" id="PS00914">
    <property type="entry name" value="SYNTAXIN"/>
    <property type="match status" value="1"/>
</dbReference>
<dbReference type="PROSITE" id="PS50192">
    <property type="entry name" value="T_SNARE"/>
    <property type="match status" value="1"/>
</dbReference>
<organism>
    <name type="scientific">Homo sapiens</name>
    <name type="common">Human</name>
    <dbReference type="NCBI Taxonomy" id="9606"/>
    <lineage>
        <taxon>Eukaryota</taxon>
        <taxon>Metazoa</taxon>
        <taxon>Chordata</taxon>
        <taxon>Craniata</taxon>
        <taxon>Vertebrata</taxon>
        <taxon>Euteleostomi</taxon>
        <taxon>Mammalia</taxon>
        <taxon>Eutheria</taxon>
        <taxon>Euarchontoglires</taxon>
        <taxon>Primates</taxon>
        <taxon>Haplorrhini</taxon>
        <taxon>Catarrhini</taxon>
        <taxon>Hominidae</taxon>
        <taxon>Homo</taxon>
    </lineage>
</organism>
<proteinExistence type="evidence at protein level"/>
<protein>
    <recommendedName>
        <fullName>Syntaxin-12</fullName>
    </recommendedName>
</protein>
<comment type="function">
    <text evidence="1">SNARE promoting fusion of transport vesicles with target membranes. Together with SNARE STX6, promotes movement of vesicles from endosomes to the cell membrane, and may therefore function in the endocytic recycling pathway. Through complex formation with GRIP1, GRIA2 and NSG1 controls the intracellular fate of AMPAR and the endosomal sorting of the GRIA2 subunit toward recycling and membrane targeting.</text>
</comment>
<comment type="subunit">
    <text evidence="1 2 6">Interacts with NAPA and SNAP23. Identified in a complex containing STX6, STX12, VAMP4 and VTI1A (By similarity). Associates with the BLOC-1 complex (PubMed:19546860). Interacts with BLOC1S6 (PubMed:19546860). Interacts with GRIPAP1 (By similarity). Forms a complex with GRIP1, GRIA2 and NSG1; controls the intracellular fate of AMPAR and the endosomal sorting of the GRIA2 subunit toward recycling and membrane targeting. Interacts with NSG1 (By similarity). Interacts with TPC1 (By similarity). Interacts (via N-terminus) with VPS13B (By similarity).</text>
</comment>
<comment type="interaction">
    <interactant intactId="EBI-2691717">
        <id>Q86Y82</id>
    </interactant>
    <interactant intactId="EBI-784112">
        <id>O95477</id>
        <label>ABCA1</label>
    </interactant>
    <organismsDiffer>false</organismsDiffer>
    <experiments>9</experiments>
</comment>
<comment type="interaction">
    <interactant intactId="EBI-2691717">
        <id>Q86Y82</id>
    </interactant>
    <interactant intactId="EBI-13059134">
        <id>Q13520</id>
        <label>AQP6</label>
    </interactant>
    <organismsDiffer>false</organismsDiffer>
    <experiments>3</experiments>
</comment>
<comment type="interaction">
    <interactant intactId="EBI-2691717">
        <id>Q86Y82</id>
    </interactant>
    <interactant intactId="EBI-19124986">
        <id>O94778</id>
        <label>AQP8</label>
    </interactant>
    <organismsDiffer>false</organismsDiffer>
    <experiments>3</experiments>
</comment>
<comment type="interaction">
    <interactant intactId="EBI-2691717">
        <id>Q86Y82</id>
    </interactant>
    <interactant intactId="EBI-747430">
        <id>Q9BXK5</id>
        <label>BCL2L13</label>
    </interactant>
    <organismsDiffer>false</organismsDiffer>
    <experiments>3</experiments>
</comment>
<comment type="interaction">
    <interactant intactId="EBI-2691717">
        <id>Q86Y82</id>
    </interactant>
    <interactant intactId="EBI-7797864">
        <id>P11912</id>
        <label>CD79A</label>
    </interactant>
    <organismsDiffer>false</organismsDiffer>
    <experiments>3</experiments>
</comment>
<comment type="interaction">
    <interactant intactId="EBI-2691717">
        <id>Q86Y82</id>
    </interactant>
    <interactant intactId="EBI-1045797">
        <id>Q8N5K1</id>
        <label>CISD2</label>
    </interactant>
    <organismsDiffer>false</organismsDiffer>
    <experiments>3</experiments>
</comment>
<comment type="interaction">
    <interactant intactId="EBI-2691717">
        <id>Q86Y82</id>
    </interactant>
    <interactant intactId="EBI-740376">
        <id>Q86UW9</id>
        <label>DTX2</label>
    </interactant>
    <organismsDiffer>false</organismsDiffer>
    <experiments>7</experiments>
</comment>
<comment type="interaction">
    <interactant intactId="EBI-2691717">
        <id>Q86Y82</id>
    </interactant>
    <interactant intactId="EBI-3915253">
        <id>Q15125</id>
        <label>EBP</label>
    </interactant>
    <organismsDiffer>false</organismsDiffer>
    <experiments>3</experiments>
</comment>
<comment type="interaction">
    <interactant intactId="EBI-2691717">
        <id>Q86Y82</id>
    </interactant>
    <interactant intactId="EBI-781551">
        <id>Q9Y282</id>
        <label>ERGIC3</label>
    </interactant>
    <organismsDiffer>false</organismsDiffer>
    <experiments>3</experiments>
</comment>
<comment type="interaction">
    <interactant intactId="EBI-2691717">
        <id>Q86Y82</id>
    </interactant>
    <interactant intactId="EBI-3917143">
        <id>Q5T7V8</id>
        <label>GORAB</label>
    </interactant>
    <organismsDiffer>false</organismsDiffer>
    <experiments>3</experiments>
</comment>
<comment type="interaction">
    <interactant intactId="EBI-2691717">
        <id>Q86Y82</id>
    </interactant>
    <interactant intactId="EBI-749265">
        <id>Q8N6L0</id>
        <label>KASH5</label>
    </interactant>
    <organismsDiffer>false</organismsDiffer>
    <experiments>3</experiments>
</comment>
<comment type="interaction">
    <interactant intactId="EBI-2691717">
        <id>Q86Y82</id>
    </interactant>
    <interactant intactId="EBI-750776">
        <id>O95214</id>
        <label>LEPROTL1</label>
    </interactant>
    <organismsDiffer>false</organismsDiffer>
    <experiments>3</experiments>
</comment>
<comment type="interaction">
    <interactant intactId="EBI-2691717">
        <id>Q86Y82</id>
    </interactant>
    <interactant intactId="EBI-2858252">
        <id>Q6ZSS7</id>
        <label>MFSD6</label>
    </interactant>
    <organismsDiffer>false</organismsDiffer>
    <experiments>3</experiments>
</comment>
<comment type="interaction">
    <interactant intactId="EBI-2691717">
        <id>Q86Y82</id>
    </interactant>
    <interactant intactId="EBI-6163737">
        <id>Q8N4V1</id>
        <label>MMGT1</label>
    </interactant>
    <organismsDiffer>false</organismsDiffer>
    <experiments>3</experiments>
</comment>
<comment type="interaction">
    <interactant intactId="EBI-2691717">
        <id>Q86Y82</id>
    </interactant>
    <interactant intactId="EBI-10969203">
        <id>O14524-2</id>
        <label>NEMP1</label>
    </interactant>
    <organismsDiffer>false</organismsDiffer>
    <experiments>3</experiments>
</comment>
<comment type="interaction">
    <interactant intactId="EBI-2691717">
        <id>Q86Y82</id>
    </interactant>
    <interactant intactId="EBI-716063">
        <id>Q13113</id>
        <label>PDZK1IP1</label>
    </interactant>
    <organismsDiffer>false</organismsDiffer>
    <experiments>3</experiments>
</comment>
<comment type="interaction">
    <interactant intactId="EBI-2691717">
        <id>Q86Y82</id>
    </interactant>
    <interactant intactId="EBI-12955265">
        <id>Q96GM1</id>
        <label>PLPPR2</label>
    </interactant>
    <organismsDiffer>false</organismsDiffer>
    <experiments>3</experiments>
</comment>
<comment type="interaction">
    <interactant intactId="EBI-2691717">
        <id>Q86Y82</id>
    </interactant>
    <interactant intactId="EBI-12375429">
        <id>Q7Z5B4-5</id>
        <label>RIC3</label>
    </interactant>
    <organismsDiffer>false</organismsDiffer>
    <experiments>3</experiments>
</comment>
<comment type="interaction">
    <interactant intactId="EBI-2691717">
        <id>Q86Y82</id>
    </interactant>
    <interactant intactId="EBI-2855401">
        <id>Q9BY50</id>
        <label>SEC11C</label>
    </interactant>
    <organismsDiffer>false</organismsDiffer>
    <experiments>3</experiments>
</comment>
<comment type="interaction">
    <interactant intactId="EBI-2691717">
        <id>Q86Y82</id>
    </interactant>
    <interactant intactId="EBI-18159983">
        <id>Q3KNW5</id>
        <label>SLC10A6</label>
    </interactant>
    <organismsDiffer>false</organismsDiffer>
    <experiments>3</experiments>
</comment>
<comment type="interaction">
    <interactant intactId="EBI-2691717">
        <id>Q86Y82</id>
    </interactant>
    <interactant intactId="EBI-3907610">
        <id>Q8N2U9</id>
        <label>SLC66A2</label>
    </interactant>
    <organismsDiffer>false</organismsDiffer>
    <experiments>3</experiments>
</comment>
<comment type="interaction">
    <interactant intactId="EBI-2691717">
        <id>Q86Y82</id>
    </interactant>
    <interactant intactId="EBI-490676">
        <id>O95721</id>
        <label>SNAP29</label>
    </interactant>
    <organismsDiffer>false</organismsDiffer>
    <experiments>9</experiments>
</comment>
<comment type="interaction">
    <interactant intactId="EBI-2691717">
        <id>Q86Y82</id>
    </interactant>
    <interactant intactId="EBI-10244848">
        <id>Q5SQN1</id>
        <label>SNAP47</label>
    </interactant>
    <organismsDiffer>false</organismsDiffer>
    <experiments>5</experiments>
</comment>
<comment type="interaction">
    <interactant intactId="EBI-2691717">
        <id>Q86Y82</id>
    </interactant>
    <interactant intactId="EBI-712466">
        <id>Q16623</id>
        <label>STX1A</label>
    </interactant>
    <organismsDiffer>false</organismsDiffer>
    <experiments>3</experiments>
</comment>
<comment type="interaction">
    <interactant intactId="EBI-2691717">
        <id>Q86Y82</id>
    </interactant>
    <interactant intactId="EBI-11956649">
        <id>P32856-2</id>
        <label>STX2</label>
    </interactant>
    <organismsDiffer>false</organismsDiffer>
    <experiments>3</experiments>
</comment>
<comment type="interaction">
    <interactant intactId="EBI-2691717">
        <id>Q86Y82</id>
    </interactant>
    <interactant intactId="EBI-744942">
        <id>Q12846</id>
        <label>STX4</label>
    </interactant>
    <organismsDiffer>false</organismsDiffer>
    <experiments>9</experiments>
</comment>
<comment type="interaction">
    <interactant intactId="EBI-2691717">
        <id>Q86Y82</id>
    </interactant>
    <interactant intactId="EBI-11294039">
        <id>Q9Y2K9</id>
        <label>STXBP5L</label>
    </interactant>
    <organismsDiffer>false</organismsDiffer>
    <experiments>3</experiments>
</comment>
<comment type="interaction">
    <interactant intactId="EBI-2691717">
        <id>Q86Y82</id>
    </interactant>
    <interactant intactId="EBI-6268651">
        <id>Q9NPL8</id>
        <label>TIMMDC1</label>
    </interactant>
    <organismsDiffer>false</organismsDiffer>
    <experiments>3</experiments>
</comment>
<comment type="interaction">
    <interactant intactId="EBI-2691717">
        <id>Q86Y82</id>
    </interactant>
    <interactant intactId="EBI-12947623">
        <id>Q96MV1</id>
        <label>TLCD4</label>
    </interactant>
    <organismsDiffer>false</organismsDiffer>
    <experiments>3</experiments>
</comment>
<comment type="interaction">
    <interactant intactId="EBI-2691717">
        <id>Q86Y82</id>
    </interactant>
    <interactant intactId="EBI-8638294">
        <id>Q9NUH8</id>
        <label>TMEM14B</label>
    </interactant>
    <organismsDiffer>false</organismsDiffer>
    <experiments>3</experiments>
</comment>
<comment type="interaction">
    <interactant intactId="EBI-2691717">
        <id>Q86Y82</id>
    </interactant>
    <interactant intactId="EBI-17684533">
        <id>Q9NRX6</id>
        <label>TMEM167B</label>
    </interactant>
    <organismsDiffer>false</organismsDiffer>
    <experiments>3</experiments>
</comment>
<comment type="interaction">
    <interactant intactId="EBI-2691717">
        <id>Q86Y82</id>
    </interactant>
    <interactant intactId="EBI-2548832">
        <id>Q8N661</id>
        <label>TMEM86B</label>
    </interactant>
    <organismsDiffer>false</organismsDiffer>
    <experiments>3</experiments>
</comment>
<comment type="interaction">
    <interactant intactId="EBI-2691717">
        <id>Q86Y82</id>
    </interactant>
    <interactant intactId="EBI-6447886">
        <id>Q9Y320</id>
        <label>TMX2</label>
    </interactant>
    <organismsDiffer>false</organismsDiffer>
    <experiments>3</experiments>
</comment>
<comment type="subcellular location">
    <subcellularLocation>
        <location evidence="1">Endosome membrane</location>
        <topology evidence="1">Single-pass type IV membrane protein</topology>
    </subcellularLocation>
    <subcellularLocation>
        <location evidence="1">Golgi apparatus membrane</location>
        <topology evidence="1">Single-pass type IV membrane protein</topology>
    </subcellularLocation>
    <subcellularLocation>
        <location evidence="1">Endomembrane system</location>
        <topology evidence="1">Single-pass type IV membrane protein</topology>
        <orientation evidence="1">Cytoplasmic side</orientation>
    </subcellularLocation>
    <subcellularLocation>
        <location evidence="1">Early endosome membrane</location>
        <topology evidence="1">Single-pass type IV membrane protein</topology>
    </subcellularLocation>
    <subcellularLocation>
        <location evidence="1">Recycling endosome membrane</location>
        <topology evidence="1">Single-pass type IV membrane protein</topology>
    </subcellularLocation>
</comment>
<comment type="similarity">
    <text evidence="7">Belongs to the syntaxin family.</text>
</comment>
<comment type="sequence caution" evidence="7">
    <conflict type="erroneous initiation">
        <sequence resource="EMBL-CDS" id="CAA22911"/>
    </conflict>
    <text>Truncated N-terminus.</text>
</comment>
<sequence>MSYGPLDMYRNPGPSGPQLRDFSSIIQTCSGNIQRISQATAQIKNLMSQLGTKQDSSKLQENLQQLQHSTNQLAKETNELLKELGSLPLPLSTSEQRQQRLQKERLMNDFSAALNNFQAVQRRVSEKEKESIARARAGSRLSAEERQREEQLVSFDSHEEWNQMQSQEDEVAITEQDLELIKERETAIRQLEADILDVNQIFKDLAMMIHDQGDLIDSIEANVESSEVHVERATEQLQRAAYYQKKSRKKMCILVLVLSVIILILGLIIWLVYKTK</sequence>
<feature type="initiator methionine" description="Removed" evidence="9 10">
    <location>
        <position position="1"/>
    </location>
</feature>
<feature type="chain" id="PRO_0000210223" description="Syntaxin-12">
    <location>
        <begin position="2"/>
        <end position="276"/>
    </location>
</feature>
<feature type="topological domain" description="Cytoplasmic" evidence="3">
    <location>
        <begin position="2"/>
        <end position="248"/>
    </location>
</feature>
<feature type="transmembrane region" description="Helical; Anchor for type IV membrane protein" evidence="3">
    <location>
        <begin position="249"/>
        <end position="269"/>
    </location>
</feature>
<feature type="topological domain" description="Vesicular" evidence="3">
    <location>
        <begin position="270"/>
        <end position="276"/>
    </location>
</feature>
<feature type="domain" description="t-SNARE coiled-coil homology" evidence="4">
    <location>
        <begin position="178"/>
        <end position="240"/>
    </location>
</feature>
<feature type="coiled-coil region" evidence="3">
    <location>
        <begin position="33"/>
        <end position="131"/>
    </location>
</feature>
<feature type="modified residue" description="N-acetylserine" evidence="9 10">
    <location>
        <position position="2"/>
    </location>
</feature>
<feature type="modified residue" description="Phosphoserine" evidence="2">
    <location>
        <position position="139"/>
    </location>
</feature>
<feature type="modified residue" description="Phosphoserine" evidence="8 11">
    <location>
        <position position="142"/>
    </location>
</feature>
<feature type="modified residue" description="Phosphoserine" evidence="2">
    <location>
        <position position="218"/>
    </location>
</feature>
<feature type="modified residue" description="Phosphoserine" evidence="2">
    <location>
        <position position="225"/>
    </location>
</feature>
<feature type="sequence variant" id="VAR_035643" description="In a breast cancer sample; somatic mutation." evidence="5">
    <original>P</original>
    <variation>R</variation>
    <location>
        <position position="88"/>
    </location>
</feature>
<feature type="helix" evidence="12">
    <location>
        <begin position="22"/>
        <end position="50"/>
    </location>
</feature>
<feature type="strand" evidence="12">
    <location>
        <begin position="52"/>
        <end position="54"/>
    </location>
</feature>
<feature type="helix" evidence="12">
    <location>
        <begin position="57"/>
        <end position="86"/>
    </location>
</feature>
<feature type="helix" evidence="12">
    <location>
        <begin position="93"/>
        <end position="132"/>
    </location>
</feature>
<reference key="1">
    <citation type="submission" date="1999-01" db="EMBL/GenBank/DDBJ databases">
        <title>Cloning a new human cDNA homologous to R.norvegicus syntaxin 12 mRNA.</title>
        <authorList>
            <person name="Yang J."/>
            <person name="Yu L."/>
            <person name="Zhao S.Y."/>
        </authorList>
    </citation>
    <scope>NUCLEOTIDE SEQUENCE [MRNA]</scope>
</reference>
<reference key="2">
    <citation type="submission" date="1999-01" db="EMBL/GenBank/DDBJ databases">
        <authorList>
            <person name="Rhodes S."/>
        </authorList>
    </citation>
    <scope>NUCLEOTIDE SEQUENCE [LARGE SCALE MRNA]</scope>
</reference>
<reference key="3">
    <citation type="journal article" date="2004" name="Nat. Genet.">
        <title>Complete sequencing and characterization of 21,243 full-length human cDNAs.</title>
        <authorList>
            <person name="Ota T."/>
            <person name="Suzuki Y."/>
            <person name="Nishikawa T."/>
            <person name="Otsuki T."/>
            <person name="Sugiyama T."/>
            <person name="Irie R."/>
            <person name="Wakamatsu A."/>
            <person name="Hayashi K."/>
            <person name="Sato H."/>
            <person name="Nagai K."/>
            <person name="Kimura K."/>
            <person name="Makita H."/>
            <person name="Sekine M."/>
            <person name="Obayashi M."/>
            <person name="Nishi T."/>
            <person name="Shibahara T."/>
            <person name="Tanaka T."/>
            <person name="Ishii S."/>
            <person name="Yamamoto J."/>
            <person name="Saito K."/>
            <person name="Kawai Y."/>
            <person name="Isono Y."/>
            <person name="Nakamura Y."/>
            <person name="Nagahari K."/>
            <person name="Murakami K."/>
            <person name="Yasuda T."/>
            <person name="Iwayanagi T."/>
            <person name="Wagatsuma M."/>
            <person name="Shiratori A."/>
            <person name="Sudo H."/>
            <person name="Hosoiri T."/>
            <person name="Kaku Y."/>
            <person name="Kodaira H."/>
            <person name="Kondo H."/>
            <person name="Sugawara M."/>
            <person name="Takahashi M."/>
            <person name="Kanda K."/>
            <person name="Yokoi T."/>
            <person name="Furuya T."/>
            <person name="Kikkawa E."/>
            <person name="Omura Y."/>
            <person name="Abe K."/>
            <person name="Kamihara K."/>
            <person name="Katsuta N."/>
            <person name="Sato K."/>
            <person name="Tanikawa M."/>
            <person name="Yamazaki M."/>
            <person name="Ninomiya K."/>
            <person name="Ishibashi T."/>
            <person name="Yamashita H."/>
            <person name="Murakawa K."/>
            <person name="Fujimori K."/>
            <person name="Tanai H."/>
            <person name="Kimata M."/>
            <person name="Watanabe M."/>
            <person name="Hiraoka S."/>
            <person name="Chiba Y."/>
            <person name="Ishida S."/>
            <person name="Ono Y."/>
            <person name="Takiguchi S."/>
            <person name="Watanabe S."/>
            <person name="Yosida M."/>
            <person name="Hotuta T."/>
            <person name="Kusano J."/>
            <person name="Kanehori K."/>
            <person name="Takahashi-Fujii A."/>
            <person name="Hara H."/>
            <person name="Tanase T.-O."/>
            <person name="Nomura Y."/>
            <person name="Togiya S."/>
            <person name="Komai F."/>
            <person name="Hara R."/>
            <person name="Takeuchi K."/>
            <person name="Arita M."/>
            <person name="Imose N."/>
            <person name="Musashino K."/>
            <person name="Yuuki H."/>
            <person name="Oshima A."/>
            <person name="Sasaki N."/>
            <person name="Aotsuka S."/>
            <person name="Yoshikawa Y."/>
            <person name="Matsunawa H."/>
            <person name="Ichihara T."/>
            <person name="Shiohata N."/>
            <person name="Sano S."/>
            <person name="Moriya S."/>
            <person name="Momiyama H."/>
            <person name="Satoh N."/>
            <person name="Takami S."/>
            <person name="Terashima Y."/>
            <person name="Suzuki O."/>
            <person name="Nakagawa S."/>
            <person name="Senoh A."/>
            <person name="Mizoguchi H."/>
            <person name="Goto Y."/>
            <person name="Shimizu F."/>
            <person name="Wakebe H."/>
            <person name="Hishigaki H."/>
            <person name="Watanabe T."/>
            <person name="Sugiyama A."/>
            <person name="Takemoto M."/>
            <person name="Kawakami B."/>
            <person name="Yamazaki M."/>
            <person name="Watanabe K."/>
            <person name="Kumagai A."/>
            <person name="Itakura S."/>
            <person name="Fukuzumi Y."/>
            <person name="Fujimori Y."/>
            <person name="Komiyama M."/>
            <person name="Tashiro H."/>
            <person name="Tanigami A."/>
            <person name="Fujiwara T."/>
            <person name="Ono T."/>
            <person name="Yamada K."/>
            <person name="Fujii Y."/>
            <person name="Ozaki K."/>
            <person name="Hirao M."/>
            <person name="Ohmori Y."/>
            <person name="Kawabata A."/>
            <person name="Hikiji T."/>
            <person name="Kobatake N."/>
            <person name="Inagaki H."/>
            <person name="Ikema Y."/>
            <person name="Okamoto S."/>
            <person name="Okitani R."/>
            <person name="Kawakami T."/>
            <person name="Noguchi S."/>
            <person name="Itoh T."/>
            <person name="Shigeta K."/>
            <person name="Senba T."/>
            <person name="Matsumura K."/>
            <person name="Nakajima Y."/>
            <person name="Mizuno T."/>
            <person name="Morinaga M."/>
            <person name="Sasaki M."/>
            <person name="Togashi T."/>
            <person name="Oyama M."/>
            <person name="Hata H."/>
            <person name="Watanabe M."/>
            <person name="Komatsu T."/>
            <person name="Mizushima-Sugano J."/>
            <person name="Satoh T."/>
            <person name="Shirai Y."/>
            <person name="Takahashi Y."/>
            <person name="Nakagawa K."/>
            <person name="Okumura K."/>
            <person name="Nagase T."/>
            <person name="Nomura N."/>
            <person name="Kikuchi H."/>
            <person name="Masuho Y."/>
            <person name="Yamashita R."/>
            <person name="Nakai K."/>
            <person name="Yada T."/>
            <person name="Nakamura Y."/>
            <person name="Ohara O."/>
            <person name="Isogai T."/>
            <person name="Sugano S."/>
        </authorList>
    </citation>
    <scope>NUCLEOTIDE SEQUENCE [LARGE SCALE MRNA]</scope>
    <source>
        <tissue>Brain</tissue>
    </source>
</reference>
<reference key="4">
    <citation type="journal article" date="2006" name="Nature">
        <title>The DNA sequence and biological annotation of human chromosome 1.</title>
        <authorList>
            <person name="Gregory S.G."/>
            <person name="Barlow K.F."/>
            <person name="McLay K.E."/>
            <person name="Kaul R."/>
            <person name="Swarbreck D."/>
            <person name="Dunham A."/>
            <person name="Scott C.E."/>
            <person name="Howe K.L."/>
            <person name="Woodfine K."/>
            <person name="Spencer C.C.A."/>
            <person name="Jones M.C."/>
            <person name="Gillson C."/>
            <person name="Searle S."/>
            <person name="Zhou Y."/>
            <person name="Kokocinski F."/>
            <person name="McDonald L."/>
            <person name="Evans R."/>
            <person name="Phillips K."/>
            <person name="Atkinson A."/>
            <person name="Cooper R."/>
            <person name="Jones C."/>
            <person name="Hall R.E."/>
            <person name="Andrews T.D."/>
            <person name="Lloyd C."/>
            <person name="Ainscough R."/>
            <person name="Almeida J.P."/>
            <person name="Ambrose K.D."/>
            <person name="Anderson F."/>
            <person name="Andrew R.W."/>
            <person name="Ashwell R.I.S."/>
            <person name="Aubin K."/>
            <person name="Babbage A.K."/>
            <person name="Bagguley C.L."/>
            <person name="Bailey J."/>
            <person name="Beasley H."/>
            <person name="Bethel G."/>
            <person name="Bird C.P."/>
            <person name="Bray-Allen S."/>
            <person name="Brown J.Y."/>
            <person name="Brown A.J."/>
            <person name="Buckley D."/>
            <person name="Burton J."/>
            <person name="Bye J."/>
            <person name="Carder C."/>
            <person name="Chapman J.C."/>
            <person name="Clark S.Y."/>
            <person name="Clarke G."/>
            <person name="Clee C."/>
            <person name="Cobley V."/>
            <person name="Collier R.E."/>
            <person name="Corby N."/>
            <person name="Coville G.J."/>
            <person name="Davies J."/>
            <person name="Deadman R."/>
            <person name="Dunn M."/>
            <person name="Earthrowl M."/>
            <person name="Ellington A.G."/>
            <person name="Errington H."/>
            <person name="Frankish A."/>
            <person name="Frankland J."/>
            <person name="French L."/>
            <person name="Garner P."/>
            <person name="Garnett J."/>
            <person name="Gay L."/>
            <person name="Ghori M.R.J."/>
            <person name="Gibson R."/>
            <person name="Gilby L.M."/>
            <person name="Gillett W."/>
            <person name="Glithero R.J."/>
            <person name="Grafham D.V."/>
            <person name="Griffiths C."/>
            <person name="Griffiths-Jones S."/>
            <person name="Grocock R."/>
            <person name="Hammond S."/>
            <person name="Harrison E.S.I."/>
            <person name="Hart E."/>
            <person name="Haugen E."/>
            <person name="Heath P.D."/>
            <person name="Holmes S."/>
            <person name="Holt K."/>
            <person name="Howden P.J."/>
            <person name="Hunt A.R."/>
            <person name="Hunt S.E."/>
            <person name="Hunter G."/>
            <person name="Isherwood J."/>
            <person name="James R."/>
            <person name="Johnson C."/>
            <person name="Johnson D."/>
            <person name="Joy A."/>
            <person name="Kay M."/>
            <person name="Kershaw J.K."/>
            <person name="Kibukawa M."/>
            <person name="Kimberley A.M."/>
            <person name="King A."/>
            <person name="Knights A.J."/>
            <person name="Lad H."/>
            <person name="Laird G."/>
            <person name="Lawlor S."/>
            <person name="Leongamornlert D.A."/>
            <person name="Lloyd D.M."/>
            <person name="Loveland J."/>
            <person name="Lovell J."/>
            <person name="Lush M.J."/>
            <person name="Lyne R."/>
            <person name="Martin S."/>
            <person name="Mashreghi-Mohammadi M."/>
            <person name="Matthews L."/>
            <person name="Matthews N.S.W."/>
            <person name="McLaren S."/>
            <person name="Milne S."/>
            <person name="Mistry S."/>
            <person name="Moore M.J.F."/>
            <person name="Nickerson T."/>
            <person name="O'Dell C.N."/>
            <person name="Oliver K."/>
            <person name="Palmeiri A."/>
            <person name="Palmer S.A."/>
            <person name="Parker A."/>
            <person name="Patel D."/>
            <person name="Pearce A.V."/>
            <person name="Peck A.I."/>
            <person name="Pelan S."/>
            <person name="Phelps K."/>
            <person name="Phillimore B.J."/>
            <person name="Plumb R."/>
            <person name="Rajan J."/>
            <person name="Raymond C."/>
            <person name="Rouse G."/>
            <person name="Saenphimmachak C."/>
            <person name="Sehra H.K."/>
            <person name="Sheridan E."/>
            <person name="Shownkeen R."/>
            <person name="Sims S."/>
            <person name="Skuce C.D."/>
            <person name="Smith M."/>
            <person name="Steward C."/>
            <person name="Subramanian S."/>
            <person name="Sycamore N."/>
            <person name="Tracey A."/>
            <person name="Tromans A."/>
            <person name="Van Helmond Z."/>
            <person name="Wall M."/>
            <person name="Wallis J.M."/>
            <person name="White S."/>
            <person name="Whitehead S.L."/>
            <person name="Wilkinson J.E."/>
            <person name="Willey D.L."/>
            <person name="Williams H."/>
            <person name="Wilming L."/>
            <person name="Wray P.W."/>
            <person name="Wu Z."/>
            <person name="Coulson A."/>
            <person name="Vaudin M."/>
            <person name="Sulston J.E."/>
            <person name="Durbin R.M."/>
            <person name="Hubbard T."/>
            <person name="Wooster R."/>
            <person name="Dunham I."/>
            <person name="Carter N.P."/>
            <person name="McVean G."/>
            <person name="Ross M.T."/>
            <person name="Harrow J."/>
            <person name="Olson M.V."/>
            <person name="Beck S."/>
            <person name="Rogers J."/>
            <person name="Bentley D.R."/>
        </authorList>
    </citation>
    <scope>NUCLEOTIDE SEQUENCE [LARGE SCALE GENOMIC DNA]</scope>
</reference>
<reference key="5">
    <citation type="submission" date="2005-07" db="EMBL/GenBank/DDBJ databases">
        <authorList>
            <person name="Mural R.J."/>
            <person name="Istrail S."/>
            <person name="Sutton G.G."/>
            <person name="Florea L."/>
            <person name="Halpern A.L."/>
            <person name="Mobarry C.M."/>
            <person name="Lippert R."/>
            <person name="Walenz B."/>
            <person name="Shatkay H."/>
            <person name="Dew I."/>
            <person name="Miller J.R."/>
            <person name="Flanigan M.J."/>
            <person name="Edwards N.J."/>
            <person name="Bolanos R."/>
            <person name="Fasulo D."/>
            <person name="Halldorsson B.V."/>
            <person name="Hannenhalli S."/>
            <person name="Turner R."/>
            <person name="Yooseph S."/>
            <person name="Lu F."/>
            <person name="Nusskern D.R."/>
            <person name="Shue B.C."/>
            <person name="Zheng X.H."/>
            <person name="Zhong F."/>
            <person name="Delcher A.L."/>
            <person name="Huson D.H."/>
            <person name="Kravitz S.A."/>
            <person name="Mouchard L."/>
            <person name="Reinert K."/>
            <person name="Remington K.A."/>
            <person name="Clark A.G."/>
            <person name="Waterman M.S."/>
            <person name="Eichler E.E."/>
            <person name="Adams M.D."/>
            <person name="Hunkapiller M.W."/>
            <person name="Myers E.W."/>
            <person name="Venter J.C."/>
        </authorList>
    </citation>
    <scope>NUCLEOTIDE SEQUENCE [LARGE SCALE GENOMIC DNA]</scope>
</reference>
<reference key="6">
    <citation type="journal article" date="2004" name="Genome Res.">
        <title>The status, quality, and expansion of the NIH full-length cDNA project: the Mammalian Gene Collection (MGC).</title>
        <authorList>
            <consortium name="The MGC Project Team"/>
        </authorList>
    </citation>
    <scope>NUCLEOTIDE SEQUENCE [LARGE SCALE MRNA]</scope>
    <source>
        <tissue>Colon</tissue>
    </source>
</reference>
<reference key="7">
    <citation type="journal article" date="2006" name="Cell">
        <title>Global, in vivo, and site-specific phosphorylation dynamics in signaling networks.</title>
        <authorList>
            <person name="Olsen J.V."/>
            <person name="Blagoev B."/>
            <person name="Gnad F."/>
            <person name="Macek B."/>
            <person name="Kumar C."/>
            <person name="Mortensen P."/>
            <person name="Mann M."/>
        </authorList>
    </citation>
    <scope>PHOSPHORYLATION [LARGE SCALE ANALYSIS] AT SER-142</scope>
    <scope>IDENTIFICATION BY MASS SPECTROMETRY [LARGE SCALE ANALYSIS]</scope>
    <source>
        <tissue>Cervix carcinoma</tissue>
    </source>
</reference>
<reference key="8">
    <citation type="journal article" date="2008" name="Proc. Natl. Acad. Sci. U.S.A.">
        <title>A quantitative atlas of mitotic phosphorylation.</title>
        <authorList>
            <person name="Dephoure N."/>
            <person name="Zhou C."/>
            <person name="Villen J."/>
            <person name="Beausoleil S.A."/>
            <person name="Bakalarski C.E."/>
            <person name="Elledge S.J."/>
            <person name="Gygi S.P."/>
        </authorList>
    </citation>
    <scope>IDENTIFICATION BY MASS SPECTROMETRY [LARGE SCALE ANALYSIS]</scope>
    <source>
        <tissue>Cervix carcinoma</tissue>
    </source>
</reference>
<reference key="9">
    <citation type="journal article" date="2010" name="Mol. Psychiatry">
        <title>The dysbindin-containing complex (BLOC-1) in brain: developmental regulation, interaction with SNARE proteins and role in neurite outgrowth.</title>
        <authorList>
            <person name="Ghiani C.A."/>
            <person name="Starcevic M."/>
            <person name="Rodriguez-Fernandez I.A."/>
            <person name="Nazarian R."/>
            <person name="Cheli V.T."/>
            <person name="Chan L.N."/>
            <person name="Malvar J.S."/>
            <person name="de Vellis J."/>
            <person name="Sabatti C."/>
            <person name="Dell'Angelica E.C."/>
        </authorList>
    </citation>
    <scope>ASSOCIATION WITH THE BLOC-1 COMPLEX</scope>
    <scope>INTERACTION WITH BLOC1S6</scope>
</reference>
<reference key="10">
    <citation type="journal article" date="2011" name="BMC Syst. Biol.">
        <title>Initial characterization of the human central proteome.</title>
        <authorList>
            <person name="Burkard T.R."/>
            <person name="Planyavsky M."/>
            <person name="Kaupe I."/>
            <person name="Breitwieser F.P."/>
            <person name="Buerckstuemmer T."/>
            <person name="Bennett K.L."/>
            <person name="Superti-Furga G."/>
            <person name="Colinge J."/>
        </authorList>
    </citation>
    <scope>IDENTIFICATION BY MASS SPECTROMETRY [LARGE SCALE ANALYSIS]</scope>
</reference>
<reference key="11">
    <citation type="journal article" date="2012" name="Mol. Cell. Proteomics">
        <title>Comparative large-scale characterisation of plant vs. mammal proteins reveals similar and idiosyncratic N-alpha acetylation features.</title>
        <authorList>
            <person name="Bienvenut W.V."/>
            <person name="Sumpton D."/>
            <person name="Martinez A."/>
            <person name="Lilla S."/>
            <person name="Espagne C."/>
            <person name="Meinnel T."/>
            <person name="Giglione C."/>
        </authorList>
    </citation>
    <scope>ACETYLATION [LARGE SCALE ANALYSIS] AT SER-2</scope>
    <scope>CLEAVAGE OF INITIATOR METHIONINE [LARGE SCALE ANALYSIS]</scope>
    <scope>IDENTIFICATION BY MASS SPECTROMETRY [LARGE SCALE ANALYSIS]</scope>
</reference>
<reference key="12">
    <citation type="journal article" date="2012" name="Proc. Natl. Acad. Sci. U.S.A.">
        <title>N-terminal acetylome analyses and functional insights of the N-terminal acetyltransferase NatB.</title>
        <authorList>
            <person name="Van Damme P."/>
            <person name="Lasa M."/>
            <person name="Polevoda B."/>
            <person name="Gazquez C."/>
            <person name="Elosegui-Artola A."/>
            <person name="Kim D.S."/>
            <person name="De Juan-Pardo E."/>
            <person name="Demeyer K."/>
            <person name="Hole K."/>
            <person name="Larrea E."/>
            <person name="Timmerman E."/>
            <person name="Prieto J."/>
            <person name="Arnesen T."/>
            <person name="Sherman F."/>
            <person name="Gevaert K."/>
            <person name="Aldabe R."/>
        </authorList>
    </citation>
    <scope>ACETYLATION [LARGE SCALE ANALYSIS] AT SER-2</scope>
    <scope>CLEAVAGE OF INITIATOR METHIONINE [LARGE SCALE ANALYSIS]</scope>
    <scope>IDENTIFICATION BY MASS SPECTROMETRY [LARGE SCALE ANALYSIS]</scope>
</reference>
<reference key="13">
    <citation type="journal article" date="2013" name="J. Proteome Res.">
        <title>Toward a comprehensive characterization of a human cancer cell phosphoproteome.</title>
        <authorList>
            <person name="Zhou H."/>
            <person name="Di Palma S."/>
            <person name="Preisinger C."/>
            <person name="Peng M."/>
            <person name="Polat A.N."/>
            <person name="Heck A.J."/>
            <person name="Mohammed S."/>
        </authorList>
    </citation>
    <scope>PHOSPHORYLATION [LARGE SCALE ANALYSIS] AT SER-142</scope>
    <scope>IDENTIFICATION BY MASS SPECTROMETRY [LARGE SCALE ANALYSIS]</scope>
    <source>
        <tissue>Erythroleukemia</tissue>
    </source>
</reference>
<reference key="14">
    <citation type="journal article" date="2015" name="Proteomics">
        <title>N-terminome analysis of the human mitochondrial proteome.</title>
        <authorList>
            <person name="Vaca Jacome A.S."/>
            <person name="Rabilloud T."/>
            <person name="Schaeffer-Reiss C."/>
            <person name="Rompais M."/>
            <person name="Ayoub D."/>
            <person name="Lane L."/>
            <person name="Bairoch A."/>
            <person name="Van Dorsselaer A."/>
            <person name="Carapito C."/>
        </authorList>
    </citation>
    <scope>IDENTIFICATION BY MASS SPECTROMETRY [LARGE SCALE ANALYSIS]</scope>
</reference>
<reference key="15">
    <citation type="submission" date="2006-10" db="PDB data bank">
        <title>Solution structure of RSGI RUH-063, an N-terminal domain of syntaxin 12 from human cDNA.</title>
        <authorList>
            <consortium name="RIKEN structural genomics initiative (RSGI)"/>
        </authorList>
    </citation>
    <scope>STRUCTURE BY NMR OF 18-134</scope>
</reference>
<reference key="16">
    <citation type="journal article" date="2006" name="Science">
        <title>The consensus coding sequences of human breast and colorectal cancers.</title>
        <authorList>
            <person name="Sjoeblom T."/>
            <person name="Jones S."/>
            <person name="Wood L.D."/>
            <person name="Parsons D.W."/>
            <person name="Lin J."/>
            <person name="Barber T.D."/>
            <person name="Mandelker D."/>
            <person name="Leary R.J."/>
            <person name="Ptak J."/>
            <person name="Silliman N."/>
            <person name="Szabo S."/>
            <person name="Buckhaults P."/>
            <person name="Farrell C."/>
            <person name="Meeh P."/>
            <person name="Markowitz S.D."/>
            <person name="Willis J."/>
            <person name="Dawson D."/>
            <person name="Willson J.K.V."/>
            <person name="Gazdar A.F."/>
            <person name="Hartigan J."/>
            <person name="Wu L."/>
            <person name="Liu C."/>
            <person name="Parmigiani G."/>
            <person name="Park B.H."/>
            <person name="Bachman K.E."/>
            <person name="Papadopoulos N."/>
            <person name="Vogelstein B."/>
            <person name="Kinzler K.W."/>
            <person name="Velculescu V.E."/>
        </authorList>
    </citation>
    <scope>VARIANT [LARGE SCALE ANALYSIS] ARG-88</scope>
</reference>
<evidence type="ECO:0000250" key="1">
    <source>
        <dbReference type="UniProtKB" id="G3V7P1"/>
    </source>
</evidence>
<evidence type="ECO:0000250" key="2">
    <source>
        <dbReference type="UniProtKB" id="Q9ER00"/>
    </source>
</evidence>
<evidence type="ECO:0000255" key="3"/>
<evidence type="ECO:0000255" key="4">
    <source>
        <dbReference type="PROSITE-ProRule" id="PRU00202"/>
    </source>
</evidence>
<evidence type="ECO:0000269" key="5">
    <source>
    </source>
</evidence>
<evidence type="ECO:0000269" key="6">
    <source>
    </source>
</evidence>
<evidence type="ECO:0000305" key="7"/>
<evidence type="ECO:0007744" key="8">
    <source>
    </source>
</evidence>
<evidence type="ECO:0007744" key="9">
    <source>
    </source>
</evidence>
<evidence type="ECO:0007744" key="10">
    <source>
    </source>
</evidence>
<evidence type="ECO:0007744" key="11">
    <source>
    </source>
</evidence>
<evidence type="ECO:0007829" key="12">
    <source>
        <dbReference type="PDB" id="2DNX"/>
    </source>
</evidence>